<gene>
    <name type="ordered locus">EF_2780</name>
</gene>
<evidence type="ECO:0000255" key="1">
    <source>
        <dbReference type="HAMAP-Rule" id="MF_00274"/>
    </source>
</evidence>
<dbReference type="EMBL" id="AE016830">
    <property type="protein sequence ID" value="AAO82476.1"/>
    <property type="molecule type" value="Genomic_DNA"/>
</dbReference>
<dbReference type="RefSeq" id="NP_816406.1">
    <property type="nucleotide sequence ID" value="NC_004668.1"/>
</dbReference>
<dbReference type="RefSeq" id="WP_002384048.1">
    <property type="nucleotide sequence ID" value="NZ_KE136528.1"/>
</dbReference>
<dbReference type="SMR" id="Q830K2"/>
<dbReference type="STRING" id="226185.EF_2780"/>
<dbReference type="EnsemblBacteria" id="AAO82476">
    <property type="protein sequence ID" value="AAO82476"/>
    <property type="gene ID" value="EF_2780"/>
</dbReference>
<dbReference type="KEGG" id="efa:EF2780"/>
<dbReference type="PATRIC" id="fig|226185.45.peg.790"/>
<dbReference type="eggNOG" id="COG0718">
    <property type="taxonomic scope" value="Bacteria"/>
</dbReference>
<dbReference type="HOGENOM" id="CLU_140930_1_0_9"/>
<dbReference type="Proteomes" id="UP000001415">
    <property type="component" value="Chromosome"/>
</dbReference>
<dbReference type="GO" id="GO:0043590">
    <property type="term" value="C:bacterial nucleoid"/>
    <property type="evidence" value="ECO:0007669"/>
    <property type="project" value="UniProtKB-UniRule"/>
</dbReference>
<dbReference type="GO" id="GO:0005829">
    <property type="term" value="C:cytosol"/>
    <property type="evidence" value="ECO:0007669"/>
    <property type="project" value="TreeGrafter"/>
</dbReference>
<dbReference type="GO" id="GO:0003677">
    <property type="term" value="F:DNA binding"/>
    <property type="evidence" value="ECO:0007669"/>
    <property type="project" value="UniProtKB-UniRule"/>
</dbReference>
<dbReference type="Gene3D" id="3.30.1310.10">
    <property type="entry name" value="Nucleoid-associated protein YbaB-like domain"/>
    <property type="match status" value="1"/>
</dbReference>
<dbReference type="HAMAP" id="MF_00274">
    <property type="entry name" value="DNA_YbaB_EbfC"/>
    <property type="match status" value="1"/>
</dbReference>
<dbReference type="InterPro" id="IPR036894">
    <property type="entry name" value="YbaB-like_sf"/>
</dbReference>
<dbReference type="InterPro" id="IPR004401">
    <property type="entry name" value="YbaB/EbfC"/>
</dbReference>
<dbReference type="NCBIfam" id="TIGR00103">
    <property type="entry name" value="DNA_YbaB_EbfC"/>
    <property type="match status" value="1"/>
</dbReference>
<dbReference type="PANTHER" id="PTHR33449">
    <property type="entry name" value="NUCLEOID-ASSOCIATED PROTEIN YBAB"/>
    <property type="match status" value="1"/>
</dbReference>
<dbReference type="PANTHER" id="PTHR33449:SF1">
    <property type="entry name" value="NUCLEOID-ASSOCIATED PROTEIN YBAB"/>
    <property type="match status" value="1"/>
</dbReference>
<dbReference type="Pfam" id="PF02575">
    <property type="entry name" value="YbaB_DNA_bd"/>
    <property type="match status" value="1"/>
</dbReference>
<dbReference type="PIRSF" id="PIRSF004555">
    <property type="entry name" value="UCP004555"/>
    <property type="match status" value="1"/>
</dbReference>
<dbReference type="SUPFAM" id="SSF82607">
    <property type="entry name" value="YbaB-like"/>
    <property type="match status" value="1"/>
</dbReference>
<organism>
    <name type="scientific">Enterococcus faecalis (strain ATCC 700802 / V583)</name>
    <dbReference type="NCBI Taxonomy" id="226185"/>
    <lineage>
        <taxon>Bacteria</taxon>
        <taxon>Bacillati</taxon>
        <taxon>Bacillota</taxon>
        <taxon>Bacilli</taxon>
        <taxon>Lactobacillales</taxon>
        <taxon>Enterococcaceae</taxon>
        <taxon>Enterococcus</taxon>
    </lineage>
</organism>
<sequence>MMRGMGNMQGMMKQVQKMQKEMAKAQEALNEKEFIGEATNQLVTATFTGDRTMKDLIIKEDVVDPEDVDMLQDLVIMAVNDALVKIEKETEATLGKYTKGMPGF</sequence>
<accession>Q830K2</accession>
<protein>
    <recommendedName>
        <fullName evidence="1">Nucleoid-associated protein EF_2780</fullName>
    </recommendedName>
</protein>
<comment type="function">
    <text evidence="1">Binds to DNA and alters its conformation. May be involved in regulation of gene expression, nucleoid organization and DNA protection.</text>
</comment>
<comment type="subunit">
    <text evidence="1">Homodimer.</text>
</comment>
<comment type="subcellular location">
    <subcellularLocation>
        <location evidence="1">Cytoplasm</location>
        <location evidence="1">Nucleoid</location>
    </subcellularLocation>
</comment>
<comment type="similarity">
    <text evidence="1">Belongs to the YbaB/EbfC family.</text>
</comment>
<proteinExistence type="inferred from homology"/>
<reference key="1">
    <citation type="journal article" date="2003" name="Science">
        <title>Role of mobile DNA in the evolution of vancomycin-resistant Enterococcus faecalis.</title>
        <authorList>
            <person name="Paulsen I.T."/>
            <person name="Banerjei L."/>
            <person name="Myers G.S.A."/>
            <person name="Nelson K.E."/>
            <person name="Seshadri R."/>
            <person name="Read T.D."/>
            <person name="Fouts D.E."/>
            <person name="Eisen J.A."/>
            <person name="Gill S.R."/>
            <person name="Heidelberg J.F."/>
            <person name="Tettelin H."/>
            <person name="Dodson R.J."/>
            <person name="Umayam L.A."/>
            <person name="Brinkac L.M."/>
            <person name="Beanan M.J."/>
            <person name="Daugherty S.C."/>
            <person name="DeBoy R.T."/>
            <person name="Durkin S.A."/>
            <person name="Kolonay J.F."/>
            <person name="Madupu R."/>
            <person name="Nelson W.C."/>
            <person name="Vamathevan J.J."/>
            <person name="Tran B."/>
            <person name="Upton J."/>
            <person name="Hansen T."/>
            <person name="Shetty J."/>
            <person name="Khouri H.M."/>
            <person name="Utterback T.R."/>
            <person name="Radune D."/>
            <person name="Ketchum K.A."/>
            <person name="Dougherty B.A."/>
            <person name="Fraser C.M."/>
        </authorList>
    </citation>
    <scope>NUCLEOTIDE SEQUENCE [LARGE SCALE GENOMIC DNA]</scope>
    <source>
        <strain>ATCC 700802 / V583</strain>
    </source>
</reference>
<name>Y2780_ENTFA</name>
<keyword id="KW-0963">Cytoplasm</keyword>
<keyword id="KW-0238">DNA-binding</keyword>
<keyword id="KW-1185">Reference proteome</keyword>
<feature type="chain" id="PRO_0000170394" description="Nucleoid-associated protein EF_2780">
    <location>
        <begin position="1"/>
        <end position="104"/>
    </location>
</feature>